<evidence type="ECO:0000255" key="1">
    <source>
        <dbReference type="HAMAP-Rule" id="MF_00624"/>
    </source>
</evidence>
<organism>
    <name type="scientific">Histophilus somni (strain 129Pt)</name>
    <name type="common">Haemophilus somnus</name>
    <dbReference type="NCBI Taxonomy" id="205914"/>
    <lineage>
        <taxon>Bacteria</taxon>
        <taxon>Pseudomonadati</taxon>
        <taxon>Pseudomonadota</taxon>
        <taxon>Gammaproteobacteria</taxon>
        <taxon>Pasteurellales</taxon>
        <taxon>Pasteurellaceae</taxon>
        <taxon>Histophilus</taxon>
    </lineage>
</organism>
<name>GLGC_HISS1</name>
<reference key="1">
    <citation type="journal article" date="2007" name="J. Bacteriol.">
        <title>Complete genome sequence of Haemophilus somnus (Histophilus somni) strain 129Pt and comparison to Haemophilus ducreyi 35000HP and Haemophilus influenzae Rd.</title>
        <authorList>
            <person name="Challacombe J.F."/>
            <person name="Duncan A.J."/>
            <person name="Brettin T.S."/>
            <person name="Bruce D."/>
            <person name="Chertkov O."/>
            <person name="Detter J.C."/>
            <person name="Han C.S."/>
            <person name="Misra M."/>
            <person name="Richardson P."/>
            <person name="Tapia R."/>
            <person name="Thayer N."/>
            <person name="Xie G."/>
            <person name="Inzana T.J."/>
        </authorList>
    </citation>
    <scope>NUCLEOTIDE SEQUENCE [LARGE SCALE GENOMIC DNA]</scope>
    <source>
        <strain>129Pt</strain>
    </source>
</reference>
<sequence>MSNSITKNLSKHKLVKDTLVLILAGGRGSRLHELTDKRAKPALYFGGNRRIIDFALSNCINSGLNRIGVVTQYAAHSLLRHLQKGWSFLPQERGEFIDMLPARQQIDDSTWYRGTADAVYQNMAIIRDHYRPKYILILAGDHIYKQDYSQMLLDHVSSNAKCTVGCIEVPREQASEFGVMAVDENLKVKAFVEKPKDPPAIPNKPDTSLASMGIYVFDADYLYDVLMREVNTPYTSHDFGKDILPKSLEEEVLYAHPFSRSCMGRNTDGEIYWRDVGTLDSFWQSNIDLVSEHPQLDIYDQRWPIRGNPTQTYPSKFFYNKQDIKPVDNSLISGGCVITDAEISYSVLFDQVKVKADSKVEYSVVLPQVTIGKNCILRNCIIDRQVVIPDNTVIGVNIEEDRKRFRVSSTGKVILVTESMMKKLNGEKVVSEIHLD</sequence>
<feature type="chain" id="PRO_0000261875" description="Glucose-1-phosphate adenylyltransferase">
    <location>
        <begin position="1"/>
        <end position="436"/>
    </location>
</feature>
<feature type="binding site" evidence="1">
    <location>
        <position position="112"/>
    </location>
    <ligand>
        <name>alpha-D-glucose 1-phosphate</name>
        <dbReference type="ChEBI" id="CHEBI:58601"/>
    </ligand>
</feature>
<feature type="binding site" evidence="1">
    <location>
        <position position="178"/>
    </location>
    <ligand>
        <name>alpha-D-glucose 1-phosphate</name>
        <dbReference type="ChEBI" id="CHEBI:58601"/>
    </ligand>
</feature>
<feature type="binding site" evidence="1">
    <location>
        <begin position="193"/>
        <end position="194"/>
    </location>
    <ligand>
        <name>alpha-D-glucose 1-phosphate</name>
        <dbReference type="ChEBI" id="CHEBI:58601"/>
    </ligand>
</feature>
<feature type="binding site" evidence="1">
    <location>
        <position position="211"/>
    </location>
    <ligand>
        <name>alpha-D-glucose 1-phosphate</name>
        <dbReference type="ChEBI" id="CHEBI:58601"/>
    </ligand>
</feature>
<proteinExistence type="inferred from homology"/>
<protein>
    <recommendedName>
        <fullName evidence="1">Glucose-1-phosphate adenylyltransferase</fullName>
        <ecNumber evidence="1">2.7.7.27</ecNumber>
    </recommendedName>
    <alternativeName>
        <fullName evidence="1">ADP-glucose pyrophosphorylase</fullName>
        <shortName evidence="1">ADPGlc PPase</shortName>
    </alternativeName>
    <alternativeName>
        <fullName evidence="1">ADP-glucose synthase</fullName>
    </alternativeName>
</protein>
<dbReference type="EC" id="2.7.7.27" evidence="1"/>
<dbReference type="EMBL" id="CP000436">
    <property type="protein sequence ID" value="ABI25162.1"/>
    <property type="molecule type" value="Genomic_DNA"/>
</dbReference>
<dbReference type="SMR" id="Q0I3H9"/>
<dbReference type="KEGG" id="hso:HS_0887"/>
<dbReference type="eggNOG" id="COG0448">
    <property type="taxonomic scope" value="Bacteria"/>
</dbReference>
<dbReference type="HOGENOM" id="CLU_029499_14_1_6"/>
<dbReference type="UniPathway" id="UPA00164"/>
<dbReference type="GO" id="GO:0005524">
    <property type="term" value="F:ATP binding"/>
    <property type="evidence" value="ECO:0007669"/>
    <property type="project" value="UniProtKB-KW"/>
</dbReference>
<dbReference type="GO" id="GO:0008878">
    <property type="term" value="F:glucose-1-phosphate adenylyltransferase activity"/>
    <property type="evidence" value="ECO:0007669"/>
    <property type="project" value="UniProtKB-UniRule"/>
</dbReference>
<dbReference type="GO" id="GO:0005978">
    <property type="term" value="P:glycogen biosynthetic process"/>
    <property type="evidence" value="ECO:0007669"/>
    <property type="project" value="UniProtKB-UniRule"/>
</dbReference>
<dbReference type="CDD" id="cd02508">
    <property type="entry name" value="ADP_Glucose_PP"/>
    <property type="match status" value="1"/>
</dbReference>
<dbReference type="CDD" id="cd04651">
    <property type="entry name" value="LbH_G1P_AT_C"/>
    <property type="match status" value="1"/>
</dbReference>
<dbReference type="Gene3D" id="2.160.10.10">
    <property type="entry name" value="Hexapeptide repeat proteins"/>
    <property type="match status" value="1"/>
</dbReference>
<dbReference type="Gene3D" id="3.90.550.10">
    <property type="entry name" value="Spore Coat Polysaccharide Biosynthesis Protein SpsA, Chain A"/>
    <property type="match status" value="1"/>
</dbReference>
<dbReference type="HAMAP" id="MF_00624">
    <property type="entry name" value="GlgC"/>
    <property type="match status" value="1"/>
</dbReference>
<dbReference type="InterPro" id="IPR011831">
    <property type="entry name" value="ADP-Glc_PPase"/>
</dbReference>
<dbReference type="InterPro" id="IPR005836">
    <property type="entry name" value="ADP_Glu_pyroP_CS"/>
</dbReference>
<dbReference type="InterPro" id="IPR023049">
    <property type="entry name" value="GlgC_bac"/>
</dbReference>
<dbReference type="InterPro" id="IPR056818">
    <property type="entry name" value="GlmU/GlgC-like_hexapep"/>
</dbReference>
<dbReference type="InterPro" id="IPR005835">
    <property type="entry name" value="NTP_transferase_dom"/>
</dbReference>
<dbReference type="InterPro" id="IPR029044">
    <property type="entry name" value="Nucleotide-diphossugar_trans"/>
</dbReference>
<dbReference type="InterPro" id="IPR011004">
    <property type="entry name" value="Trimer_LpxA-like_sf"/>
</dbReference>
<dbReference type="NCBIfam" id="TIGR02091">
    <property type="entry name" value="glgC"/>
    <property type="match status" value="1"/>
</dbReference>
<dbReference type="NCBIfam" id="NF001947">
    <property type="entry name" value="PRK00725.1"/>
    <property type="match status" value="1"/>
</dbReference>
<dbReference type="NCBIfam" id="NF002023">
    <property type="entry name" value="PRK00844.1"/>
    <property type="match status" value="1"/>
</dbReference>
<dbReference type="PANTHER" id="PTHR43523:SF2">
    <property type="entry name" value="GLUCOSE-1-PHOSPHATE ADENYLYLTRANSFERASE"/>
    <property type="match status" value="1"/>
</dbReference>
<dbReference type="PANTHER" id="PTHR43523">
    <property type="entry name" value="GLUCOSE-1-PHOSPHATE ADENYLYLTRANSFERASE-RELATED"/>
    <property type="match status" value="1"/>
</dbReference>
<dbReference type="Pfam" id="PF24894">
    <property type="entry name" value="Hexapep_GlmU"/>
    <property type="match status" value="1"/>
</dbReference>
<dbReference type="Pfam" id="PF00483">
    <property type="entry name" value="NTP_transferase"/>
    <property type="match status" value="1"/>
</dbReference>
<dbReference type="SUPFAM" id="SSF53448">
    <property type="entry name" value="Nucleotide-diphospho-sugar transferases"/>
    <property type="match status" value="1"/>
</dbReference>
<dbReference type="SUPFAM" id="SSF51161">
    <property type="entry name" value="Trimeric LpxA-like enzymes"/>
    <property type="match status" value="1"/>
</dbReference>
<dbReference type="PROSITE" id="PS00808">
    <property type="entry name" value="ADP_GLC_PYROPHOSPH_1"/>
    <property type="match status" value="1"/>
</dbReference>
<dbReference type="PROSITE" id="PS00809">
    <property type="entry name" value="ADP_GLC_PYROPHOSPH_2"/>
    <property type="match status" value="1"/>
</dbReference>
<dbReference type="PROSITE" id="PS00810">
    <property type="entry name" value="ADP_GLC_PYROPHOSPH_3"/>
    <property type="match status" value="1"/>
</dbReference>
<comment type="function">
    <text evidence="1">Involved in the biosynthesis of ADP-glucose, a building block required for the elongation reactions to produce glycogen. Catalyzes the reaction between ATP and alpha-D-glucose 1-phosphate (G1P) to produce pyrophosphate and ADP-Glc.</text>
</comment>
<comment type="catalytic activity">
    <reaction evidence="1">
        <text>alpha-D-glucose 1-phosphate + ATP + H(+) = ADP-alpha-D-glucose + diphosphate</text>
        <dbReference type="Rhea" id="RHEA:12120"/>
        <dbReference type="ChEBI" id="CHEBI:15378"/>
        <dbReference type="ChEBI" id="CHEBI:30616"/>
        <dbReference type="ChEBI" id="CHEBI:33019"/>
        <dbReference type="ChEBI" id="CHEBI:57498"/>
        <dbReference type="ChEBI" id="CHEBI:58601"/>
        <dbReference type="EC" id="2.7.7.27"/>
    </reaction>
</comment>
<comment type="pathway">
    <text evidence="1">Glycan biosynthesis; glycogen biosynthesis.</text>
</comment>
<comment type="subunit">
    <text evidence="1">Homotetramer.</text>
</comment>
<comment type="similarity">
    <text evidence="1">Belongs to the bacterial/plant glucose-1-phosphate adenylyltransferase family.</text>
</comment>
<keyword id="KW-0067">ATP-binding</keyword>
<keyword id="KW-0119">Carbohydrate metabolism</keyword>
<keyword id="KW-0320">Glycogen biosynthesis</keyword>
<keyword id="KW-0321">Glycogen metabolism</keyword>
<keyword id="KW-0547">Nucleotide-binding</keyword>
<keyword id="KW-0548">Nucleotidyltransferase</keyword>
<keyword id="KW-0808">Transferase</keyword>
<accession>Q0I3H9</accession>
<gene>
    <name evidence="1" type="primary">glgC</name>
    <name type="ordered locus">HS_0887</name>
</gene>